<sequence length="1108" mass="124770">MERATQPRPRALLLLFLLLGCAAGISAVARARSLLAPTSDTAFGLGAAAAPTSAARVPAVATAEVTVEDAEALPAASGEQESRATESDDDVELRPRGRSLVIISTLDGRIAALDAENHGKKQWDLDVGSGSLVSSSLSKPEVFGNKMIIPSLDGDLFQWDRDRESMEAVPFTVESLLESSYKFGDDVVLVGGKSLTTYGLSAYSGKLRYICSALGCRRWDSDEMEEEEDILLLQRTQKTVRAVGPRSGSEKWNFSVGHFELRYIPDMETRAGFIESTFKLGGNKEDSKIISDVEEQDVDTVIKVSVADWKVMAFSKKGGRLEWEYQFCTPIASAWLVRDGKVIPISLFDDTSYTANEEVLEDEEDIVEAARGATENSVYLGMYRGQLYLQSSVRVSEKFPTRPKALESVNGESAIIPLPTIKWKPLIHSPSRTPVLVGSDEFDKCLSNDKYSHEEYSNGALSILQYPYDNGYYLPYYKRERNKRSTQITVRFLDSPHYSKNIRKKDPILLLHWWKEIFGTILLCIVATTFIVRRLFHPQPHRQRKESETQCQTESKYDSVSADNSDNSWNDIKHSGYVSRYLTDFEPIQCMGRGGFGVVFEAKNKVDDCNYAIKRIRLPNRELAREKVMREVKALAKLEHPGIVRYFNAWLETPPEKWQEEMDEIWLKDESTDWPLSSPSPMDAPSVKIRQMDPFSTKEQIEVIAPSPERSRSFSVGISCGRTSSSESQFSPLEFSGTDCGDNSDSEDAAHNLQDSCLTDCDMEDGTVDGDDEGHSFELCPSEASPYTRSREGTSSSIVFEDSGCDNASSKEDPRMNRLHNGHHYVNKLTEFKHSSSRSSSEATLSTSPTRPTTLSLDFTRNTVDRLQPSSPKVYLYIQMQLCRKENLKDWMNRRCSMEDREHRVCLHIFLQIAEAVQFLHSKGLMHRDLKPSNIFFTMDDVVKVGDFGLVTAMDQDEEEQTVLTPMPAYATHTGQVGTKLYMSPEQIHGNNYSHKVDIFSLGLILFELLYPFSTQMERVRTLTDVRNLKFPPLFTQKYPQEHMMVQDMLSPSPMERPEATDIIENAVFENLEFPGKTVLRQRSRSLSSSGTKHSRQPSSTFSPLPGN</sequence>
<comment type="function">
    <text evidence="1 2 9">Metabolic-stress sensing protein kinase that phosphorylates the alpha subunit of eukaryotic translation initiation factor 2 (EIF2S1/eIF-2-alpha) in response to various stress, such as unfolded protein response (UPR) (PubMed:9819435). Key effector of the integrated stress response (ISR) to unfolded proteins: EIF2AK3/PERK specifically recognizes and binds misfolded proteins, leading to its activation and EIF2S1/eIF-2-alpha phosphorylation (By similarity). EIF2S1/eIF-2-alpha phosphorylation in response to stress converts EIF2S1/eIF-2-alpha in a global protein synthesis inhibitor, leading to a global attenuation of cap-dependent translation, while concomitantly initiating the preferential translation of ISR-specific mRNAs, such as the transcriptional activators ATF4 and QRICH1, and hence allowing ATF4- and QRICH1-mediated reprogramming (By similarity). The EIF2AK3/PERK-mediated unfolded protein response increases mitochondrial oxidative phosphorylation by promoting ATF4-mediated expression of COX7A2L/SCAF1, thereby increasing formation of respiratory chain supercomplexes (By similarity). In contrast to most subcellular compartments, mitochondria are protected from the EIF2AK3/PERK-mediated unfolded protein response due to EIF2AK3/PERK inhibition by ATAD3A at mitochondria-endoplasmic reticulum contact sites (By similarity). In addition to EIF2S1/eIF-2-alpha, also phosphorylates NFE2L2/NRF2 in response to stress, promoting release of NFE2L2/NRF2 from the BCR(KEAP1) complex, leading to nuclear accumulation and activation of NFE2L2/NRF2 (By similarity). Serves as a critical effector of unfolded protein response (UPR)-induced G1 growth arrest due to the loss of cyclin-D1 (CCND1) (By similarity). Involved in control of mitochondrial morphology and function (By similarity).</text>
</comment>
<comment type="catalytic activity">
    <reaction evidence="7 9">
        <text>L-seryl-[protein] + ATP = O-phospho-L-seryl-[protein] + ADP + H(+)</text>
        <dbReference type="Rhea" id="RHEA:17989"/>
        <dbReference type="Rhea" id="RHEA-COMP:9863"/>
        <dbReference type="Rhea" id="RHEA-COMP:11604"/>
        <dbReference type="ChEBI" id="CHEBI:15378"/>
        <dbReference type="ChEBI" id="CHEBI:29999"/>
        <dbReference type="ChEBI" id="CHEBI:30616"/>
        <dbReference type="ChEBI" id="CHEBI:83421"/>
        <dbReference type="ChEBI" id="CHEBI:456216"/>
        <dbReference type="EC" id="2.7.11.1"/>
    </reaction>
    <physiologicalReaction direction="left-to-right" evidence="7 9">
        <dbReference type="Rhea" id="RHEA:17990"/>
    </physiologicalReaction>
</comment>
<comment type="catalytic activity">
    <reaction evidence="2">
        <text>L-threonyl-[protein] + ATP = O-phospho-L-threonyl-[protein] + ADP + H(+)</text>
        <dbReference type="Rhea" id="RHEA:46608"/>
        <dbReference type="Rhea" id="RHEA-COMP:11060"/>
        <dbReference type="Rhea" id="RHEA-COMP:11605"/>
        <dbReference type="ChEBI" id="CHEBI:15378"/>
        <dbReference type="ChEBI" id="CHEBI:30013"/>
        <dbReference type="ChEBI" id="CHEBI:30616"/>
        <dbReference type="ChEBI" id="CHEBI:61977"/>
        <dbReference type="ChEBI" id="CHEBI:456216"/>
        <dbReference type="EC" id="2.7.11.1"/>
    </reaction>
    <physiologicalReaction direction="left-to-right" evidence="2">
        <dbReference type="Rhea" id="RHEA:46609"/>
    </physiologicalReaction>
</comment>
<comment type="catalytic activity">
    <reaction evidence="2">
        <text>L-tyrosyl-[protein] + ATP = O-phospho-L-tyrosyl-[protein] + ADP + H(+)</text>
        <dbReference type="Rhea" id="RHEA:10596"/>
        <dbReference type="Rhea" id="RHEA-COMP:10136"/>
        <dbReference type="Rhea" id="RHEA-COMP:20101"/>
        <dbReference type="ChEBI" id="CHEBI:15378"/>
        <dbReference type="ChEBI" id="CHEBI:30616"/>
        <dbReference type="ChEBI" id="CHEBI:46858"/>
        <dbReference type="ChEBI" id="CHEBI:61978"/>
        <dbReference type="ChEBI" id="CHEBI:456216"/>
        <dbReference type="EC" id="2.7.10.2"/>
    </reaction>
    <physiologicalReaction direction="left-to-right" evidence="2">
        <dbReference type="Rhea" id="RHEA:10597"/>
    </physiologicalReaction>
</comment>
<comment type="activity regulation">
    <text evidence="1 2">Inhibited by HSPA5/BIP in absence of stress (By similarity). Perturbation in protein folding in the endoplasmic reticulum (ER) promotes reversible dissociation from HSPA5/BIP and oligomerization, resulting in trans-autophosphorylation and kinase activity induction (By similarity). Inactivated following phosphorylation at Thr-794 by AKT (AKT1, AKT2 and/or AKT3) (By similarity). Inhibited by ATAD3A at mitochondria-endoplasmic reticulum contact sites, providing a safe haven for mitochondrial protein translation during ER stress (By similarity).</text>
</comment>
<comment type="subunit">
    <text evidence="1 2 8">Forms dimers with HSPA5/BIP in resting cells (By similarity). Homotetramerizes in response to endoplasmic reticulum (ER) stress, leading to its activation (PubMed:10854322). Interacts with HSP90B1/GRP94 (By similarity). Interacts with DNAJC3; inhibiting EIF2AK3/PERK activity (By similarity). Interacts with ATAD3A; ATAD3A and EIF2S1/eIF-2-alpha occupy a common binding site within the cytoplasmic loop of EIF2AK3/PERK, leading to prevent EIF2AK3/PERK association with its substrate EIF2S1/eIF-2-alpha (By similarity). Interacts with MFN2 (By similarity). Interacts with TMEM33. Interacts with PDIA6 (By similarity). Interacts with LACC1 (By similarity).</text>
</comment>
<comment type="subcellular location">
    <subcellularLocation>
        <location evidence="2">Endoplasmic reticulum membrane</location>
        <topology evidence="3">Single-pass type I membrane protein</topology>
    </subcellularLocation>
    <text evidence="1 2">Localizes to the Localizes to endoplasmic reticulum membrane (By similarity). Also present at mitochondria-endoplasmic reticulum contact sites; where it interacts with ATAD3A (By similarity).</text>
</comment>
<comment type="tissue specificity">
    <text evidence="9">Ubiquitous.</text>
</comment>
<comment type="induction">
    <text evidence="9">By ER stress.</text>
</comment>
<comment type="domain">
    <text evidence="2">The lumenal domain senses perturbations in protein folding in the ER, probably through reversible interaction with HSPA5/BIP.</text>
</comment>
<comment type="domain">
    <text evidence="2">The insert loop specifically recongnizes and binds EIF2S1/eIF-2-alpha.</text>
</comment>
<comment type="PTM">
    <text evidence="1 2">Oligomerization of the N-terminal ER luminal domain by ER stress promotes EIF2AK3/PERK trans-autophosphorylation of the C-terminal cytoplasmic kinase domain at multiple residues including Thr-974 on the kinase activation loop (By similarity). Autophosphorylated at Tyr-611 following endoplasmic reticulum stress, leading to activate its activity (By similarity). Dephosphorylated at Tyr-611 by PTPN1/PTP1B, leading to inactivate its enzyme activity (By similarity). Phosphorylation at Thr-794 by AKT (AKT1, AKT2 and/or AKT3) inactivates EIF2AK3/PERK (By similarity).</text>
</comment>
<comment type="PTM">
    <text evidence="1">ADP-ribosylated by PARP16 upon ER stress, which increases kinase activity.</text>
</comment>
<comment type="similarity">
    <text evidence="4">Belongs to the protein kinase superfamily. Ser/Thr protein kinase family. GCN2 subfamily.</text>
</comment>
<keyword id="KW-0013">ADP-ribosylation</keyword>
<keyword id="KW-0067">ATP-binding</keyword>
<keyword id="KW-0256">Endoplasmic reticulum</keyword>
<keyword id="KW-0325">Glycoprotein</keyword>
<keyword id="KW-0418">Kinase</keyword>
<keyword id="KW-0472">Membrane</keyword>
<keyword id="KW-0547">Nucleotide-binding</keyword>
<keyword id="KW-0597">Phosphoprotein</keyword>
<keyword id="KW-1185">Reference proteome</keyword>
<keyword id="KW-0723">Serine/threonine-protein kinase</keyword>
<keyword id="KW-0732">Signal</keyword>
<keyword id="KW-0346">Stress response</keyword>
<keyword id="KW-0808">Transferase</keyword>
<keyword id="KW-0810">Translation regulation</keyword>
<keyword id="KW-0812">Transmembrane</keyword>
<keyword id="KW-1133">Transmembrane helix</keyword>
<keyword id="KW-0829">Tyrosine-protein kinase</keyword>
<keyword id="KW-0834">Unfolded protein response</keyword>
<dbReference type="EC" id="2.7.11.1" evidence="7 9"/>
<dbReference type="EC" id="2.7.10.2" evidence="2"/>
<dbReference type="EMBL" id="AF096835">
    <property type="protein sequence ID" value="AAC83801.1"/>
    <property type="molecule type" value="mRNA"/>
</dbReference>
<dbReference type="PIR" id="T17455">
    <property type="entry name" value="T17455"/>
</dbReference>
<dbReference type="RefSeq" id="NP_113787.1">
    <property type="nucleotide sequence ID" value="NM_031599.2"/>
</dbReference>
<dbReference type="SMR" id="Q9Z1Z1"/>
<dbReference type="BioGRID" id="248320">
    <property type="interactions" value="1"/>
</dbReference>
<dbReference type="FunCoup" id="Q9Z1Z1">
    <property type="interactions" value="2364"/>
</dbReference>
<dbReference type="STRING" id="10116.ENSRNOP00000008451"/>
<dbReference type="BindingDB" id="Q9Z1Z1"/>
<dbReference type="ChEMBL" id="CHEMBL4105946"/>
<dbReference type="GlyCosmos" id="Q9Z1Z1">
    <property type="glycosylation" value="1 site, No reported glycans"/>
</dbReference>
<dbReference type="GlyGen" id="Q9Z1Z1">
    <property type="glycosylation" value="2 sites"/>
</dbReference>
<dbReference type="iPTMnet" id="Q9Z1Z1"/>
<dbReference type="PhosphoSitePlus" id="Q9Z1Z1"/>
<dbReference type="PaxDb" id="10116-ENSRNOP00000008451"/>
<dbReference type="Ensembl" id="ENSRNOT00000008451.6">
    <property type="protein sequence ID" value="ENSRNOP00000008451.4"/>
    <property type="gene ID" value="ENSRNOG00000006069.6"/>
</dbReference>
<dbReference type="GeneID" id="29702"/>
<dbReference type="KEGG" id="rno:29702"/>
<dbReference type="UCSC" id="RGD:70884">
    <property type="organism name" value="rat"/>
</dbReference>
<dbReference type="AGR" id="RGD:70884"/>
<dbReference type="CTD" id="9451"/>
<dbReference type="RGD" id="70884">
    <property type="gene designation" value="Eif2ak3"/>
</dbReference>
<dbReference type="eggNOG" id="KOG1033">
    <property type="taxonomic scope" value="Eukaryota"/>
</dbReference>
<dbReference type="GeneTree" id="ENSGT00940000158121"/>
<dbReference type="HOGENOM" id="CLU_009091_0_0_1"/>
<dbReference type="InParanoid" id="Q9Z1Z1"/>
<dbReference type="OMA" id="CMIEERE"/>
<dbReference type="OrthoDB" id="341578at2759"/>
<dbReference type="PhylomeDB" id="Q9Z1Z1"/>
<dbReference type="TreeFam" id="TF101511"/>
<dbReference type="Reactome" id="R-RNO-381042">
    <property type="pathway name" value="PERK regulates gene expression"/>
</dbReference>
<dbReference type="PRO" id="PR:Q9Z1Z1"/>
<dbReference type="Proteomes" id="UP000002494">
    <property type="component" value="Chromosome 4"/>
</dbReference>
<dbReference type="Bgee" id="ENSRNOG00000006069">
    <property type="expression patterns" value="Expressed in pancreas and 20 other cell types or tissues"/>
</dbReference>
<dbReference type="GO" id="GO:0005737">
    <property type="term" value="C:cytoplasm"/>
    <property type="evidence" value="ECO:0000266"/>
    <property type="project" value="RGD"/>
</dbReference>
<dbReference type="GO" id="GO:0005783">
    <property type="term" value="C:endoplasmic reticulum"/>
    <property type="evidence" value="ECO:0000266"/>
    <property type="project" value="RGD"/>
</dbReference>
<dbReference type="GO" id="GO:0005789">
    <property type="term" value="C:endoplasmic reticulum membrane"/>
    <property type="evidence" value="ECO:0000266"/>
    <property type="project" value="RGD"/>
</dbReference>
<dbReference type="GO" id="GO:0044322">
    <property type="term" value="C:endoplasmic reticulum quality control compartment"/>
    <property type="evidence" value="ECO:0000266"/>
    <property type="project" value="RGD"/>
</dbReference>
<dbReference type="GO" id="GO:0044233">
    <property type="term" value="C:mitochondria-associated endoplasmic reticulum membrane contact site"/>
    <property type="evidence" value="ECO:0000266"/>
    <property type="project" value="RGD"/>
</dbReference>
<dbReference type="GO" id="GO:0005634">
    <property type="term" value="C:nucleus"/>
    <property type="evidence" value="ECO:0000318"/>
    <property type="project" value="GO_Central"/>
</dbReference>
<dbReference type="GO" id="GO:0048471">
    <property type="term" value="C:perinuclear region of cytoplasm"/>
    <property type="evidence" value="ECO:0000314"/>
    <property type="project" value="RGD"/>
</dbReference>
<dbReference type="GO" id="GO:0005524">
    <property type="term" value="F:ATP binding"/>
    <property type="evidence" value="ECO:0007669"/>
    <property type="project" value="UniProtKB-KW"/>
</dbReference>
<dbReference type="GO" id="GO:0019899">
    <property type="term" value="F:enzyme binding"/>
    <property type="evidence" value="ECO:0000266"/>
    <property type="project" value="RGD"/>
</dbReference>
<dbReference type="GO" id="GO:0004694">
    <property type="term" value="F:eukaryotic translation initiation factor 2alpha kinase activity"/>
    <property type="evidence" value="ECO:0000314"/>
    <property type="project" value="RGD"/>
</dbReference>
<dbReference type="GO" id="GO:0051879">
    <property type="term" value="F:Hsp90 protein binding"/>
    <property type="evidence" value="ECO:0000314"/>
    <property type="project" value="ParkinsonsUK-UCL"/>
</dbReference>
<dbReference type="GO" id="GO:0042802">
    <property type="term" value="F:identical protein binding"/>
    <property type="evidence" value="ECO:0000266"/>
    <property type="project" value="RGD"/>
</dbReference>
<dbReference type="GO" id="GO:0051787">
    <property type="term" value="F:misfolded protein binding"/>
    <property type="evidence" value="ECO:0000250"/>
    <property type="project" value="UniProtKB"/>
</dbReference>
<dbReference type="GO" id="GO:0004672">
    <property type="term" value="F:protein kinase activity"/>
    <property type="evidence" value="ECO:0000266"/>
    <property type="project" value="RGD"/>
</dbReference>
<dbReference type="GO" id="GO:0019903">
    <property type="term" value="F:protein phosphatase binding"/>
    <property type="evidence" value="ECO:0000266"/>
    <property type="project" value="RGD"/>
</dbReference>
<dbReference type="GO" id="GO:0106310">
    <property type="term" value="F:protein serine kinase activity"/>
    <property type="evidence" value="ECO:0007669"/>
    <property type="project" value="RHEA"/>
</dbReference>
<dbReference type="GO" id="GO:0004674">
    <property type="term" value="F:protein serine/threonine kinase activity"/>
    <property type="evidence" value="ECO:0000314"/>
    <property type="project" value="RGD"/>
</dbReference>
<dbReference type="GO" id="GO:0004713">
    <property type="term" value="F:protein tyrosine kinase activity"/>
    <property type="evidence" value="ECO:0000250"/>
    <property type="project" value="UniProtKB"/>
</dbReference>
<dbReference type="GO" id="GO:0001525">
    <property type="term" value="P:angiogenesis"/>
    <property type="evidence" value="ECO:0000266"/>
    <property type="project" value="RGD"/>
</dbReference>
<dbReference type="GO" id="GO:0030282">
    <property type="term" value="P:bone mineralization"/>
    <property type="evidence" value="ECO:0000266"/>
    <property type="project" value="RGD"/>
</dbReference>
<dbReference type="GO" id="GO:0019722">
    <property type="term" value="P:calcium-mediated signaling"/>
    <property type="evidence" value="ECO:0000266"/>
    <property type="project" value="RGD"/>
</dbReference>
<dbReference type="GO" id="GO:0034198">
    <property type="term" value="P:cellular response to amino acid starvation"/>
    <property type="evidence" value="ECO:0000250"/>
    <property type="project" value="UniProtKB"/>
</dbReference>
<dbReference type="GO" id="GO:0070417">
    <property type="term" value="P:cellular response to cold"/>
    <property type="evidence" value="ECO:0000250"/>
    <property type="project" value="UniProtKB"/>
</dbReference>
<dbReference type="GO" id="GO:0042149">
    <property type="term" value="P:cellular response to glucose starvation"/>
    <property type="evidence" value="ECO:0000266"/>
    <property type="project" value="RGD"/>
</dbReference>
<dbReference type="GO" id="GO:0002063">
    <property type="term" value="P:chondrocyte development"/>
    <property type="evidence" value="ECO:0000266"/>
    <property type="project" value="RGD"/>
</dbReference>
<dbReference type="GO" id="GO:0031018">
    <property type="term" value="P:endocrine pancreas development"/>
    <property type="evidence" value="ECO:0000250"/>
    <property type="project" value="UniProtKB"/>
</dbReference>
<dbReference type="GO" id="GO:0007029">
    <property type="term" value="P:endoplasmic reticulum organization"/>
    <property type="evidence" value="ECO:0000266"/>
    <property type="project" value="RGD"/>
</dbReference>
<dbReference type="GO" id="GO:0030968">
    <property type="term" value="P:endoplasmic reticulum unfolded protein response"/>
    <property type="evidence" value="ECO:0000250"/>
    <property type="project" value="UniProtKB"/>
</dbReference>
<dbReference type="GO" id="GO:0006983">
    <property type="term" value="P:ER overload response"/>
    <property type="evidence" value="ECO:0000250"/>
    <property type="project" value="UniProtKB"/>
</dbReference>
<dbReference type="GO" id="GO:0036503">
    <property type="term" value="P:ERAD pathway"/>
    <property type="evidence" value="ECO:0000266"/>
    <property type="project" value="RGD"/>
</dbReference>
<dbReference type="GO" id="GO:0045444">
    <property type="term" value="P:fat cell differentiation"/>
    <property type="evidence" value="ECO:0000266"/>
    <property type="project" value="RGD"/>
</dbReference>
<dbReference type="GO" id="GO:0048009">
    <property type="term" value="P:insulin-like growth factor receptor signaling pathway"/>
    <property type="evidence" value="ECO:0000266"/>
    <property type="project" value="RGD"/>
</dbReference>
<dbReference type="GO" id="GO:0070059">
    <property type="term" value="P:intrinsic apoptotic signaling pathway in response to endoplasmic reticulum stress"/>
    <property type="evidence" value="ECO:0000266"/>
    <property type="project" value="RGD"/>
</dbReference>
<dbReference type="GO" id="GO:0007595">
    <property type="term" value="P:lactation"/>
    <property type="evidence" value="ECO:0000266"/>
    <property type="project" value="RGD"/>
</dbReference>
<dbReference type="GO" id="GO:0043066">
    <property type="term" value="P:negative regulation of apoptotic process"/>
    <property type="evidence" value="ECO:0000266"/>
    <property type="project" value="RGD"/>
</dbReference>
<dbReference type="GO" id="GO:0010629">
    <property type="term" value="P:negative regulation of gene expression"/>
    <property type="evidence" value="ECO:0000266"/>
    <property type="project" value="RGD"/>
</dbReference>
<dbReference type="GO" id="GO:0031642">
    <property type="term" value="P:negative regulation of myelination"/>
    <property type="evidence" value="ECO:0000266"/>
    <property type="project" value="RGD"/>
</dbReference>
<dbReference type="GO" id="GO:0017148">
    <property type="term" value="P:negative regulation of translation"/>
    <property type="evidence" value="ECO:0000266"/>
    <property type="project" value="RGD"/>
</dbReference>
<dbReference type="GO" id="GO:1902010">
    <property type="term" value="P:negative regulation of translation in response to endoplasmic reticulum stress"/>
    <property type="evidence" value="ECO:0000266"/>
    <property type="project" value="RGD"/>
</dbReference>
<dbReference type="GO" id="GO:0032055">
    <property type="term" value="P:negative regulation of translation in response to stress"/>
    <property type="evidence" value="ECO:0000314"/>
    <property type="project" value="RGD"/>
</dbReference>
<dbReference type="GO" id="GO:0001503">
    <property type="term" value="P:ossification"/>
    <property type="evidence" value="ECO:0000250"/>
    <property type="project" value="UniProtKB"/>
</dbReference>
<dbReference type="GO" id="GO:0031016">
    <property type="term" value="P:pancreas development"/>
    <property type="evidence" value="ECO:0000266"/>
    <property type="project" value="RGD"/>
</dbReference>
<dbReference type="GO" id="GO:0036499">
    <property type="term" value="P:PERK-mediated unfolded protein response"/>
    <property type="evidence" value="ECO:0000266"/>
    <property type="project" value="RGD"/>
</dbReference>
<dbReference type="GO" id="GO:1902237">
    <property type="term" value="P:positive regulation of endoplasmic reticulum stress-induced intrinsic apoptotic signaling pathway"/>
    <property type="evidence" value="ECO:0000266"/>
    <property type="project" value="RGD"/>
</dbReference>
<dbReference type="GO" id="GO:0010628">
    <property type="term" value="P:positive regulation of gene expression"/>
    <property type="evidence" value="ECO:0000266"/>
    <property type="project" value="RGD"/>
</dbReference>
<dbReference type="GO" id="GO:1903788">
    <property type="term" value="P:positive regulation of glutathione biosynthetic process"/>
    <property type="evidence" value="ECO:0000266"/>
    <property type="project" value="RGD"/>
</dbReference>
<dbReference type="GO" id="GO:1900182">
    <property type="term" value="P:positive regulation of protein localization to nucleus"/>
    <property type="evidence" value="ECO:0000266"/>
    <property type="project" value="RGD"/>
</dbReference>
<dbReference type="GO" id="GO:0009967">
    <property type="term" value="P:positive regulation of signal transduction"/>
    <property type="evidence" value="ECO:0000266"/>
    <property type="project" value="RGD"/>
</dbReference>
<dbReference type="GO" id="GO:0045943">
    <property type="term" value="P:positive regulation of transcription by RNA polymerase I"/>
    <property type="evidence" value="ECO:0000266"/>
    <property type="project" value="RGD"/>
</dbReference>
<dbReference type="GO" id="GO:0010575">
    <property type="term" value="P:positive regulation of vascular endothelial growth factor production"/>
    <property type="evidence" value="ECO:0000266"/>
    <property type="project" value="RGD"/>
</dbReference>
<dbReference type="GO" id="GO:0060734">
    <property type="term" value="P:regulation of endoplasmic reticulum stress-induced eIF2 alpha phosphorylation"/>
    <property type="evidence" value="ECO:0000250"/>
    <property type="project" value="UniProtKB"/>
</dbReference>
<dbReference type="GO" id="GO:1902235">
    <property type="term" value="P:regulation of endoplasmic reticulum stress-induced intrinsic apoptotic signaling pathway"/>
    <property type="evidence" value="ECO:0000266"/>
    <property type="project" value="RGD"/>
</dbReference>
<dbReference type="GO" id="GO:0019217">
    <property type="term" value="P:regulation of fatty acid metabolic process"/>
    <property type="evidence" value="ECO:0000266"/>
    <property type="project" value="RGD"/>
</dbReference>
<dbReference type="GO" id="GO:0006446">
    <property type="term" value="P:regulation of translational initiation"/>
    <property type="evidence" value="ECO:0000266"/>
    <property type="project" value="RGD"/>
</dbReference>
<dbReference type="GO" id="GO:0034976">
    <property type="term" value="P:response to endoplasmic reticulum stress"/>
    <property type="evidence" value="ECO:0000250"/>
    <property type="project" value="UniProtKB"/>
</dbReference>
<dbReference type="GO" id="GO:1990737">
    <property type="term" value="P:response to manganese-induced endoplasmic reticulum stress"/>
    <property type="evidence" value="ECO:0000270"/>
    <property type="project" value="ParkinsonsUK-UCL"/>
</dbReference>
<dbReference type="GO" id="GO:0001501">
    <property type="term" value="P:skeletal system development"/>
    <property type="evidence" value="ECO:0000266"/>
    <property type="project" value="RGD"/>
</dbReference>
<dbReference type="GO" id="GO:0032933">
    <property type="term" value="P:SREBP signaling pathway"/>
    <property type="evidence" value="ECO:0000266"/>
    <property type="project" value="RGD"/>
</dbReference>
<dbReference type="GO" id="GO:0006412">
    <property type="term" value="P:translation"/>
    <property type="evidence" value="ECO:0000266"/>
    <property type="project" value="RGD"/>
</dbReference>
<dbReference type="CDD" id="cd09768">
    <property type="entry name" value="Luminal_EIF2AK3"/>
    <property type="match status" value="1"/>
</dbReference>
<dbReference type="CDD" id="cd14048">
    <property type="entry name" value="STKc_EIF2AK3_PERK"/>
    <property type="match status" value="1"/>
</dbReference>
<dbReference type="FunFam" id="2.130.10.10:FF:000622">
    <property type="entry name" value="Eukaryotic translation initiation factor 2-alpha kinase 3"/>
    <property type="match status" value="1"/>
</dbReference>
<dbReference type="FunFam" id="3.30.200.20:FF:000193">
    <property type="entry name" value="Eukaryotic translation initiation factor 2-alpha kinase 3"/>
    <property type="match status" value="1"/>
</dbReference>
<dbReference type="FunFam" id="1.10.510.10:FF:000251">
    <property type="entry name" value="eukaryotic translation initiation factor 2-alpha kinase 3"/>
    <property type="match status" value="1"/>
</dbReference>
<dbReference type="Gene3D" id="3.30.200.20">
    <property type="entry name" value="Phosphorylase Kinase, domain 1"/>
    <property type="match status" value="1"/>
</dbReference>
<dbReference type="Gene3D" id="1.10.510.10">
    <property type="entry name" value="Transferase(Phosphotransferase) domain 1"/>
    <property type="match status" value="1"/>
</dbReference>
<dbReference type="Gene3D" id="2.130.10.10">
    <property type="entry name" value="YVTN repeat-like/Quinoprotein amine dehydrogenase"/>
    <property type="match status" value="1"/>
</dbReference>
<dbReference type="InterPro" id="IPR050339">
    <property type="entry name" value="CC_SR_Kinase"/>
</dbReference>
<dbReference type="InterPro" id="IPR011009">
    <property type="entry name" value="Kinase-like_dom_sf"/>
</dbReference>
<dbReference type="InterPro" id="IPR000719">
    <property type="entry name" value="Prot_kinase_dom"/>
</dbReference>
<dbReference type="InterPro" id="IPR011047">
    <property type="entry name" value="Quinoprotein_ADH-like_sf"/>
</dbReference>
<dbReference type="InterPro" id="IPR008271">
    <property type="entry name" value="Ser/Thr_kinase_AS"/>
</dbReference>
<dbReference type="InterPro" id="IPR015943">
    <property type="entry name" value="WD40/YVTN_repeat-like_dom_sf"/>
</dbReference>
<dbReference type="PANTHER" id="PTHR11042:SF166">
    <property type="entry name" value="EUKARYOTIC TRANSLATION INITIATION FACTOR 2-ALPHA KINASE 3"/>
    <property type="match status" value="1"/>
</dbReference>
<dbReference type="PANTHER" id="PTHR11042">
    <property type="entry name" value="EUKARYOTIC TRANSLATION INITIATION FACTOR 2-ALPHA KINASE EIF2-ALPHA KINASE -RELATED"/>
    <property type="match status" value="1"/>
</dbReference>
<dbReference type="Pfam" id="PF00069">
    <property type="entry name" value="Pkinase"/>
    <property type="match status" value="2"/>
</dbReference>
<dbReference type="SMART" id="SM00220">
    <property type="entry name" value="S_TKc"/>
    <property type="match status" value="1"/>
</dbReference>
<dbReference type="SUPFAM" id="SSF56112">
    <property type="entry name" value="Protein kinase-like (PK-like)"/>
    <property type="match status" value="1"/>
</dbReference>
<dbReference type="SUPFAM" id="SSF50998">
    <property type="entry name" value="Quinoprotein alcohol dehydrogenase-like"/>
    <property type="match status" value="1"/>
</dbReference>
<dbReference type="PROSITE" id="PS50011">
    <property type="entry name" value="PROTEIN_KINASE_DOM"/>
    <property type="match status" value="1"/>
</dbReference>
<dbReference type="PROSITE" id="PS00108">
    <property type="entry name" value="PROTEIN_KINASE_ST"/>
    <property type="match status" value="1"/>
</dbReference>
<organism>
    <name type="scientific">Rattus norvegicus</name>
    <name type="common">Rat</name>
    <dbReference type="NCBI Taxonomy" id="10116"/>
    <lineage>
        <taxon>Eukaryota</taxon>
        <taxon>Metazoa</taxon>
        <taxon>Chordata</taxon>
        <taxon>Craniata</taxon>
        <taxon>Vertebrata</taxon>
        <taxon>Euteleostomi</taxon>
        <taxon>Mammalia</taxon>
        <taxon>Eutheria</taxon>
        <taxon>Euarchontoglires</taxon>
        <taxon>Glires</taxon>
        <taxon>Rodentia</taxon>
        <taxon>Myomorpha</taxon>
        <taxon>Muroidea</taxon>
        <taxon>Muridae</taxon>
        <taxon>Murinae</taxon>
        <taxon>Rattus</taxon>
    </lineage>
</organism>
<evidence type="ECO:0000250" key="1">
    <source>
        <dbReference type="UniProtKB" id="Q9NZJ5"/>
    </source>
</evidence>
<evidence type="ECO:0000250" key="2">
    <source>
        <dbReference type="UniProtKB" id="Q9Z2B5"/>
    </source>
</evidence>
<evidence type="ECO:0000255" key="3"/>
<evidence type="ECO:0000255" key="4">
    <source>
        <dbReference type="PROSITE-ProRule" id="PRU00159"/>
    </source>
</evidence>
<evidence type="ECO:0000255" key="5">
    <source>
        <dbReference type="PROSITE-ProRule" id="PRU10027"/>
    </source>
</evidence>
<evidence type="ECO:0000256" key="6">
    <source>
        <dbReference type="SAM" id="MobiDB-lite"/>
    </source>
</evidence>
<evidence type="ECO:0000269" key="7">
    <source>
    </source>
</evidence>
<evidence type="ECO:0000269" key="8">
    <source>
    </source>
</evidence>
<evidence type="ECO:0000269" key="9">
    <source>
    </source>
</evidence>
<evidence type="ECO:0000303" key="10">
    <source>
    </source>
</evidence>
<evidence type="ECO:0000305" key="11"/>
<accession>Q9Z1Z1</accession>
<gene>
    <name type="primary">Eif2ak3</name>
    <name evidence="10" type="synonym">Pek</name>
    <name type="synonym">Perk</name>
</gene>
<protein>
    <recommendedName>
        <fullName>Eukaryotic translation initiation factor 2-alpha kinase 3</fullName>
        <ecNumber evidence="7 9">2.7.11.1</ecNumber>
    </recommendedName>
    <alternativeName>
        <fullName>PRKR-like endoplasmic reticulum kinase</fullName>
    </alternativeName>
    <alternativeName>
        <fullName evidence="10">Pancreatic eIF2-alpha kinase</fullName>
    </alternativeName>
    <alternativeName>
        <fullName evidence="11">Protein tyrosine kinase EIF2AK3</fullName>
        <ecNumber evidence="2">2.7.10.2</ecNumber>
    </alternativeName>
</protein>
<name>E2AK3_RAT</name>
<feature type="signal peptide" evidence="3">
    <location>
        <begin position="1"/>
        <end position="27"/>
    </location>
</feature>
<feature type="chain" id="PRO_0000024324" description="Eukaryotic translation initiation factor 2-alpha kinase 3">
    <location>
        <begin position="28"/>
        <end position="1108"/>
    </location>
</feature>
<feature type="topological domain" description="Lumenal" evidence="3">
    <location>
        <begin position="28"/>
        <end position="506"/>
    </location>
</feature>
<feature type="transmembrane region" description="Helical" evidence="3">
    <location>
        <begin position="507"/>
        <end position="527"/>
    </location>
</feature>
<feature type="topological domain" description="Cytoplasmic" evidence="3">
    <location>
        <begin position="528"/>
        <end position="1108"/>
    </location>
</feature>
<feature type="domain" description="Protein kinase" evidence="4">
    <location>
        <begin position="585"/>
        <end position="1069"/>
    </location>
</feature>
<feature type="region of interest" description="Disordered" evidence="6">
    <location>
        <begin position="71"/>
        <end position="92"/>
    </location>
</feature>
<feature type="region of interest" description="Disordered" evidence="6">
    <location>
        <begin position="542"/>
        <end position="563"/>
    </location>
</feature>
<feature type="region of interest" description="Insert loop" evidence="2">
    <location>
        <begin position="639"/>
        <end position="880"/>
    </location>
</feature>
<feature type="region of interest" description="Disordered" evidence="6">
    <location>
        <begin position="772"/>
        <end position="818"/>
    </location>
</feature>
<feature type="region of interest" description="Disordered" evidence="6">
    <location>
        <begin position="832"/>
        <end position="856"/>
    </location>
</feature>
<feature type="region of interest" description="Disordered" evidence="6">
    <location>
        <begin position="1080"/>
        <end position="1108"/>
    </location>
</feature>
<feature type="compositionally biased region" description="Polar residues" evidence="6">
    <location>
        <begin position="785"/>
        <end position="798"/>
    </location>
</feature>
<feature type="compositionally biased region" description="Low complexity" evidence="6">
    <location>
        <begin position="837"/>
        <end position="856"/>
    </location>
</feature>
<feature type="compositionally biased region" description="Polar residues" evidence="6">
    <location>
        <begin position="1097"/>
        <end position="1108"/>
    </location>
</feature>
<feature type="active site" description="Proton acceptor" evidence="4 5">
    <location>
        <position position="929"/>
    </location>
</feature>
<feature type="binding site" evidence="4">
    <location>
        <begin position="591"/>
        <end position="599"/>
    </location>
    <ligand>
        <name>ATP</name>
        <dbReference type="ChEBI" id="CHEBI:30616"/>
    </ligand>
</feature>
<feature type="binding site">
    <location>
        <position position="614"/>
    </location>
    <ligand>
        <name>ATP</name>
        <dbReference type="ChEBI" id="CHEBI:30616"/>
    </ligand>
</feature>
<feature type="modified residue" description="Phosphotyrosine; by autocatalysis" evidence="1">
    <location>
        <position position="611"/>
    </location>
</feature>
<feature type="modified residue" description="Phosphoserine" evidence="1">
    <location>
        <position position="707"/>
    </location>
</feature>
<feature type="modified residue" description="Phosphothreonine" evidence="2">
    <location>
        <position position="794"/>
    </location>
</feature>
<feature type="modified residue" description="Phosphothreonine" evidence="2">
    <location>
        <position position="974"/>
    </location>
</feature>
<feature type="modified residue" description="Phosphoserine" evidence="1">
    <location>
        <position position="1086"/>
    </location>
</feature>
<feature type="glycosylation site" description="N-linked (GlcNAc...) asparagine" evidence="3">
    <location>
        <position position="253"/>
    </location>
</feature>
<feature type="mutagenesis site" description="Loss of activity." evidence="7">
    <original>K</original>
    <variation>A</variation>
    <location>
        <position position="614"/>
    </location>
</feature>
<reference key="1">
    <citation type="journal article" date="1998" name="Mol. Cell. Biol.">
        <title>Identification and characterization of pancreatic eukaryotic initiation factor 2 alpha-subunit kinase, PEK, involved in translational control.</title>
        <authorList>
            <person name="Shi Y."/>
            <person name="Vattem K.M."/>
            <person name="Sood R."/>
            <person name="An J."/>
            <person name="Liang J."/>
            <person name="Stramm L.E."/>
            <person name="Wek R.C."/>
        </authorList>
    </citation>
    <scope>NUCLEOTIDE SEQUENCE [MRNA]</scope>
    <scope>FUNCTION</scope>
    <scope>CATALYTIC ACTIVITY</scope>
    <scope>TISSUE SPECIFICITY</scope>
    <scope>INDUCTION</scope>
    <source>
        <tissue>Pancreatic islet</tissue>
    </source>
</reference>
<reference key="2">
    <citation type="journal article" date="1999" name="J. Biol. Chem.">
        <title>Characterization of a mutant pancreatic eIF-2alpha kinase, PEK, and co-localization with somatostatin in islet delta cells.</title>
        <authorList>
            <person name="Shi Y."/>
            <person name="An J."/>
            <person name="Liang J."/>
            <person name="Hayes S.E."/>
            <person name="Sandusky G.E."/>
            <person name="Stramm L.E."/>
            <person name="Yang N.N."/>
        </authorList>
    </citation>
    <scope>FUNCTION</scope>
    <scope>CATALYTIC ACTIVITY</scope>
    <scope>MUTAGENESIS OF LYS-614</scope>
</reference>
<reference key="3">
    <citation type="journal article" date="2000" name="Nat. Cell Biol.">
        <title>Dynamic interaction of BiP and ER stress transducers in the unfolded-protein response.</title>
        <authorList>
            <person name="Bertolotti A."/>
            <person name="Zhang Y."/>
            <person name="Hendershot L.M."/>
            <person name="Harding H.P."/>
            <person name="Ron D."/>
        </authorList>
    </citation>
    <scope>SUBUNIT</scope>
</reference>
<proteinExistence type="evidence at protein level"/>